<name>CHBG_ESCF3</name>
<reference key="1">
    <citation type="journal article" date="2009" name="PLoS Genet.">
        <title>Organised genome dynamics in the Escherichia coli species results in highly diverse adaptive paths.</title>
        <authorList>
            <person name="Touchon M."/>
            <person name="Hoede C."/>
            <person name="Tenaillon O."/>
            <person name="Barbe V."/>
            <person name="Baeriswyl S."/>
            <person name="Bidet P."/>
            <person name="Bingen E."/>
            <person name="Bonacorsi S."/>
            <person name="Bouchier C."/>
            <person name="Bouvet O."/>
            <person name="Calteau A."/>
            <person name="Chiapello H."/>
            <person name="Clermont O."/>
            <person name="Cruveiller S."/>
            <person name="Danchin A."/>
            <person name="Diard M."/>
            <person name="Dossat C."/>
            <person name="Karoui M.E."/>
            <person name="Frapy E."/>
            <person name="Garry L."/>
            <person name="Ghigo J.M."/>
            <person name="Gilles A.M."/>
            <person name="Johnson J."/>
            <person name="Le Bouguenec C."/>
            <person name="Lescat M."/>
            <person name="Mangenot S."/>
            <person name="Martinez-Jehanne V."/>
            <person name="Matic I."/>
            <person name="Nassif X."/>
            <person name="Oztas S."/>
            <person name="Petit M.A."/>
            <person name="Pichon C."/>
            <person name="Rouy Z."/>
            <person name="Ruf C.S."/>
            <person name="Schneider D."/>
            <person name="Tourret J."/>
            <person name="Vacherie B."/>
            <person name="Vallenet D."/>
            <person name="Medigue C."/>
            <person name="Rocha E.P.C."/>
            <person name="Denamur E."/>
        </authorList>
    </citation>
    <scope>NUCLEOTIDE SEQUENCE [LARGE SCALE GENOMIC DNA]</scope>
    <source>
        <strain>ATCC 35469 / DSM 13698 / BCRC 15582 / CCUG 18766 / IAM 14443 / JCM 21226 / LMG 7866 / NBRC 102419 / NCTC 12128 / CDC 0568-73</strain>
    </source>
</reference>
<gene>
    <name evidence="1" type="primary">chbG</name>
    <name type="ordered locus">EFER_1334</name>
</gene>
<accession>B7LQ59</accession>
<proteinExistence type="inferred from homology"/>
<comment type="function">
    <text evidence="1">Involved in the degradation of chitin. ChbG is essential for growth on the acetylated chitooligosaccharides chitobiose and chitotriose but is dispensable for growth on cellobiose and chitosan dimer, the deacetylated form of chitobiose. Deacetylation of chitobiose-6-P and chitotriose-6-P is necessary for both the activation of the chb promoter by the regulatory protein ChbR and the hydrolysis of phosphorylated beta-glucosides by the phospho-beta-glucosidase ChbF. Catalyzes the removal of only one acetyl group from chitobiose-6-P to yield monoacetylchitobiose-6-P, the inducer of ChbR and the substrate of ChbF.</text>
</comment>
<comment type="catalytic activity">
    <reaction evidence="1">
        <text>N,N'-diacetylchitobiose + H2O = N-acetyl-beta-D-glucosaminyl-(1-&gt;4)-D-glucosamine + acetate</text>
        <dbReference type="Rhea" id="RHEA:27469"/>
        <dbReference type="ChEBI" id="CHEBI:15377"/>
        <dbReference type="ChEBI" id="CHEBI:28681"/>
        <dbReference type="ChEBI" id="CHEBI:30089"/>
        <dbReference type="ChEBI" id="CHEBI:59910"/>
        <dbReference type="EC" id="3.5.1.105"/>
    </reaction>
</comment>
<comment type="catalytic activity">
    <reaction evidence="1">
        <text>diacetylchitobiose-6'-phosphate + H2O = N'-monoacetylchitobiose-6'-phosphate + acetate</text>
        <dbReference type="Rhea" id="RHEA:35083"/>
        <dbReference type="ChEBI" id="CHEBI:15377"/>
        <dbReference type="ChEBI" id="CHEBI:30089"/>
        <dbReference type="ChEBI" id="CHEBI:64883"/>
        <dbReference type="ChEBI" id="CHEBI:71315"/>
    </reaction>
</comment>
<comment type="cofactor">
    <cofactor evidence="1">
        <name>Mg(2+)</name>
        <dbReference type="ChEBI" id="CHEBI:18420"/>
    </cofactor>
</comment>
<comment type="pathway">
    <text evidence="1">Glycan degradation; chitin degradation.</text>
</comment>
<comment type="subunit">
    <text evidence="1">Homodimer.</text>
</comment>
<comment type="subcellular location">
    <subcellularLocation>
        <location evidence="1">Cytoplasm</location>
    </subcellularLocation>
</comment>
<comment type="similarity">
    <text evidence="1">Belongs to the YdjC deacetylase family. ChbG subfamily.</text>
</comment>
<keyword id="KW-0119">Carbohydrate metabolism</keyword>
<keyword id="KW-0146">Chitin degradation</keyword>
<keyword id="KW-0963">Cytoplasm</keyword>
<keyword id="KW-0378">Hydrolase</keyword>
<keyword id="KW-0460">Magnesium</keyword>
<keyword id="KW-0479">Metal-binding</keyword>
<keyword id="KW-0624">Polysaccharide degradation</keyword>
<protein>
    <recommendedName>
        <fullName evidence="1">Chitooligosaccharide deacetylase</fullName>
        <shortName evidence="1">COD</shortName>
        <ecNumber evidence="1">3.5.1.105</ecNumber>
    </recommendedName>
    <alternativeName>
        <fullName evidence="1">Chitin disaccharide deacetylase</fullName>
    </alternativeName>
    <alternativeName>
        <fullName evidence="1">Chitobiose deacetylase</fullName>
    </alternativeName>
    <alternativeName>
        <fullName evidence="1">Chitobiose-6P deacetylase</fullName>
    </alternativeName>
    <alternativeName>
        <fullName evidence="1">Chitotriose deacetylase</fullName>
    </alternativeName>
    <alternativeName>
        <fullName evidence="1">Chitotriose-6P deacetylase</fullName>
    </alternativeName>
</protein>
<dbReference type="EC" id="3.5.1.105" evidence="1"/>
<dbReference type="EMBL" id="CU928158">
    <property type="protein sequence ID" value="CAQ88856.1"/>
    <property type="molecule type" value="Genomic_DNA"/>
</dbReference>
<dbReference type="RefSeq" id="WP_000440485.1">
    <property type="nucleotide sequence ID" value="NC_011740.1"/>
</dbReference>
<dbReference type="SMR" id="B7LQ59"/>
<dbReference type="GeneID" id="75057624"/>
<dbReference type="KEGG" id="efe:EFER_1334"/>
<dbReference type="HOGENOM" id="CLU_064244_4_1_6"/>
<dbReference type="OrthoDB" id="9774177at2"/>
<dbReference type="UniPathway" id="UPA00349"/>
<dbReference type="Proteomes" id="UP000000745">
    <property type="component" value="Chromosome"/>
</dbReference>
<dbReference type="GO" id="GO:0005737">
    <property type="term" value="C:cytoplasm"/>
    <property type="evidence" value="ECO:0007669"/>
    <property type="project" value="UniProtKB-SubCell"/>
</dbReference>
<dbReference type="GO" id="GO:0036311">
    <property type="term" value="F:chitin disaccharide deacetylase activity"/>
    <property type="evidence" value="ECO:0007669"/>
    <property type="project" value="UniProtKB-UniRule"/>
</dbReference>
<dbReference type="GO" id="GO:0019213">
    <property type="term" value="F:deacetylase activity"/>
    <property type="evidence" value="ECO:0007669"/>
    <property type="project" value="TreeGrafter"/>
</dbReference>
<dbReference type="GO" id="GO:0046872">
    <property type="term" value="F:metal ion binding"/>
    <property type="evidence" value="ECO:0007669"/>
    <property type="project" value="UniProtKB-KW"/>
</dbReference>
<dbReference type="GO" id="GO:0006032">
    <property type="term" value="P:chitin catabolic process"/>
    <property type="evidence" value="ECO:0007669"/>
    <property type="project" value="UniProtKB-UniPathway"/>
</dbReference>
<dbReference type="GO" id="GO:0052777">
    <property type="term" value="P:diacetylchitobiose catabolic process"/>
    <property type="evidence" value="ECO:0007669"/>
    <property type="project" value="UniProtKB-UniRule"/>
</dbReference>
<dbReference type="GO" id="GO:0000272">
    <property type="term" value="P:polysaccharide catabolic process"/>
    <property type="evidence" value="ECO:0007669"/>
    <property type="project" value="UniProtKB-UniRule"/>
</dbReference>
<dbReference type="CDD" id="cd10803">
    <property type="entry name" value="YdjC_EF3048_like"/>
    <property type="match status" value="1"/>
</dbReference>
<dbReference type="FunFam" id="3.20.20.370:FF:000001">
    <property type="entry name" value="Chitooligosaccharide deacetylase"/>
    <property type="match status" value="1"/>
</dbReference>
<dbReference type="Gene3D" id="3.20.20.370">
    <property type="entry name" value="Glycoside hydrolase/deacetylase"/>
    <property type="match status" value="1"/>
</dbReference>
<dbReference type="HAMAP" id="MF_01246">
    <property type="entry name" value="COD"/>
    <property type="match status" value="1"/>
</dbReference>
<dbReference type="InterPro" id="IPR022948">
    <property type="entry name" value="COD_ChbG_bac"/>
</dbReference>
<dbReference type="InterPro" id="IPR011330">
    <property type="entry name" value="Glyco_hydro/deAcase_b/a-brl"/>
</dbReference>
<dbReference type="InterPro" id="IPR006879">
    <property type="entry name" value="YdjC-like"/>
</dbReference>
<dbReference type="NCBIfam" id="NF002559">
    <property type="entry name" value="PRK02134.1"/>
    <property type="match status" value="1"/>
</dbReference>
<dbReference type="PANTHER" id="PTHR31609:SF1">
    <property type="entry name" value="CARBOHYDRATE DEACETYLASE"/>
    <property type="match status" value="1"/>
</dbReference>
<dbReference type="PANTHER" id="PTHR31609">
    <property type="entry name" value="YDJC DEACETYLASE FAMILY MEMBER"/>
    <property type="match status" value="1"/>
</dbReference>
<dbReference type="Pfam" id="PF04794">
    <property type="entry name" value="YdjC"/>
    <property type="match status" value="1"/>
</dbReference>
<dbReference type="SUPFAM" id="SSF88713">
    <property type="entry name" value="Glycoside hydrolase/deacetylase"/>
    <property type="match status" value="1"/>
</dbReference>
<evidence type="ECO:0000255" key="1">
    <source>
        <dbReference type="HAMAP-Rule" id="MF_01246"/>
    </source>
</evidence>
<feature type="chain" id="PRO_1000139827" description="Chitooligosaccharide deacetylase">
    <location>
        <begin position="1"/>
        <end position="252"/>
    </location>
</feature>
<feature type="binding site" evidence="1">
    <location>
        <position position="61"/>
    </location>
    <ligand>
        <name>Mg(2+)</name>
        <dbReference type="ChEBI" id="CHEBI:18420"/>
    </ligand>
</feature>
<feature type="binding site" evidence="1">
    <location>
        <position position="125"/>
    </location>
    <ligand>
        <name>Mg(2+)</name>
        <dbReference type="ChEBI" id="CHEBI:18420"/>
    </ligand>
</feature>
<organism>
    <name type="scientific">Escherichia fergusonii (strain ATCC 35469 / DSM 13698 / CCUG 18766 / IAM 14443 / JCM 21226 / LMG 7866 / NBRC 102419 / NCTC 12128 / CDC 0568-73)</name>
    <dbReference type="NCBI Taxonomy" id="585054"/>
    <lineage>
        <taxon>Bacteria</taxon>
        <taxon>Pseudomonadati</taxon>
        <taxon>Pseudomonadota</taxon>
        <taxon>Gammaproteobacteria</taxon>
        <taxon>Enterobacterales</taxon>
        <taxon>Enterobacteriaceae</taxon>
        <taxon>Escherichia</taxon>
    </lineage>
</organism>
<sequence length="252" mass="27890">MERLLIVNADDFGLSKGQNYGIIEACRNGVVTSTTALVNGEAIDHAAQLSRGAPGLAVGMHFVLTMGKPLTEMPGLTREGMLGKWIWQMAEEGALPLEEISLELASQYQRFIELFGRKPTHIDSHHHVHMFPQIFPIVASFAAEQGIALRIDRQAVFNDSDLPGELRSSQGFSSAFYGEEISNALFLKVLDDSSHRGERSLEVMCHPAFIDNTIRQSAYCFPRLTELDVLTSASLKYAIAERGYRLGSYLDV</sequence>